<keyword id="KW-0975">Bacterial flagellum</keyword>
<organism>
    <name type="scientific">Pseudomonas putida (strain ATCC 700007 / DSM 6899 / JCM 31910 / BCRC 17059 / LMG 24140 / F1)</name>
    <dbReference type="NCBI Taxonomy" id="351746"/>
    <lineage>
        <taxon>Bacteria</taxon>
        <taxon>Pseudomonadati</taxon>
        <taxon>Pseudomonadota</taxon>
        <taxon>Gammaproteobacteria</taxon>
        <taxon>Pseudomonadales</taxon>
        <taxon>Pseudomonadaceae</taxon>
        <taxon>Pseudomonas</taxon>
    </lineage>
</organism>
<feature type="chain" id="PRO_1000045868" description="Flagellar hook-basal body complex protein FliE">
    <location>
        <begin position="1"/>
        <end position="110"/>
    </location>
</feature>
<proteinExistence type="inferred from homology"/>
<protein>
    <recommendedName>
        <fullName evidence="1">Flagellar hook-basal body complex protein FliE</fullName>
    </recommendedName>
</protein>
<accession>A5W0J4</accession>
<evidence type="ECO:0000255" key="1">
    <source>
        <dbReference type="HAMAP-Rule" id="MF_00724"/>
    </source>
</evidence>
<comment type="subcellular location">
    <subcellularLocation>
        <location evidence="1">Bacterial flagellum basal body</location>
    </subcellularLocation>
</comment>
<comment type="similarity">
    <text evidence="1">Belongs to the FliE family.</text>
</comment>
<name>FLIE_PSEP1</name>
<gene>
    <name evidence="1" type="primary">fliE</name>
    <name type="ordered locus">Pput_1497</name>
</gene>
<reference key="1">
    <citation type="submission" date="2007-05" db="EMBL/GenBank/DDBJ databases">
        <title>Complete sequence of Pseudomonas putida F1.</title>
        <authorList>
            <consortium name="US DOE Joint Genome Institute"/>
            <person name="Copeland A."/>
            <person name="Lucas S."/>
            <person name="Lapidus A."/>
            <person name="Barry K."/>
            <person name="Detter J.C."/>
            <person name="Glavina del Rio T."/>
            <person name="Hammon N."/>
            <person name="Israni S."/>
            <person name="Dalin E."/>
            <person name="Tice H."/>
            <person name="Pitluck S."/>
            <person name="Chain P."/>
            <person name="Malfatti S."/>
            <person name="Shin M."/>
            <person name="Vergez L."/>
            <person name="Schmutz J."/>
            <person name="Larimer F."/>
            <person name="Land M."/>
            <person name="Hauser L."/>
            <person name="Kyrpides N."/>
            <person name="Lykidis A."/>
            <person name="Parales R."/>
            <person name="Richardson P."/>
        </authorList>
    </citation>
    <scope>NUCLEOTIDE SEQUENCE [LARGE SCALE GENOMIC DNA]</scope>
    <source>
        <strain>ATCC 700007 / DSM 6899 / JCM 31910 / BCRC 17059 / LMG 24140 / F1</strain>
    </source>
</reference>
<sequence>MSQGVEFNRLMLDMRAMQADAMSLPKVTAAPELAPGQSTFADMLGQAIGKVHETQQASTQLANAFEIGKSGVDLTDVMIASQKASVSMQAMTQVRNKLVQAYQDIMQMPV</sequence>
<dbReference type="EMBL" id="CP000712">
    <property type="protein sequence ID" value="ABQ77654.1"/>
    <property type="molecule type" value="Genomic_DNA"/>
</dbReference>
<dbReference type="SMR" id="A5W0J4"/>
<dbReference type="KEGG" id="ppf:Pput_1497"/>
<dbReference type="eggNOG" id="COG1677">
    <property type="taxonomic scope" value="Bacteria"/>
</dbReference>
<dbReference type="HOGENOM" id="CLU_147249_0_0_6"/>
<dbReference type="GO" id="GO:0009425">
    <property type="term" value="C:bacterial-type flagellum basal body"/>
    <property type="evidence" value="ECO:0007669"/>
    <property type="project" value="UniProtKB-SubCell"/>
</dbReference>
<dbReference type="GO" id="GO:0003774">
    <property type="term" value="F:cytoskeletal motor activity"/>
    <property type="evidence" value="ECO:0007669"/>
    <property type="project" value="InterPro"/>
</dbReference>
<dbReference type="GO" id="GO:0005198">
    <property type="term" value="F:structural molecule activity"/>
    <property type="evidence" value="ECO:0007669"/>
    <property type="project" value="InterPro"/>
</dbReference>
<dbReference type="GO" id="GO:0071973">
    <property type="term" value="P:bacterial-type flagellum-dependent cell motility"/>
    <property type="evidence" value="ECO:0007669"/>
    <property type="project" value="InterPro"/>
</dbReference>
<dbReference type="HAMAP" id="MF_00724">
    <property type="entry name" value="FliE"/>
    <property type="match status" value="1"/>
</dbReference>
<dbReference type="InterPro" id="IPR001624">
    <property type="entry name" value="FliE"/>
</dbReference>
<dbReference type="NCBIfam" id="TIGR00205">
    <property type="entry name" value="fliE"/>
    <property type="match status" value="1"/>
</dbReference>
<dbReference type="PANTHER" id="PTHR34653">
    <property type="match status" value="1"/>
</dbReference>
<dbReference type="PANTHER" id="PTHR34653:SF1">
    <property type="entry name" value="FLAGELLAR HOOK-BASAL BODY COMPLEX PROTEIN FLIE"/>
    <property type="match status" value="1"/>
</dbReference>
<dbReference type="Pfam" id="PF02049">
    <property type="entry name" value="FliE"/>
    <property type="match status" value="1"/>
</dbReference>
<dbReference type="PRINTS" id="PR01006">
    <property type="entry name" value="FLGHOOKFLIE"/>
</dbReference>